<reference key="1">
    <citation type="journal article" date="2016" name="Nature">
        <title>The gene cortex controls mimicry and crypsis in butterflies and moths.</title>
        <authorList>
            <person name="Nadeau N.J."/>
            <person name="Pardo-Diaz C."/>
            <person name="Whibley A."/>
            <person name="Supple M.A."/>
            <person name="Saenko S.V."/>
            <person name="Wallbank R.W."/>
            <person name="Wu G.C."/>
            <person name="Maroja L."/>
            <person name="Ferguson L."/>
            <person name="Hanly J.J."/>
            <person name="Hines H."/>
            <person name="Salazar C."/>
            <person name="Merrill R.M."/>
            <person name="Dowling A.J."/>
            <person name="ffrench-Constant R.H."/>
            <person name="Llaurens V."/>
            <person name="Joron M."/>
            <person name="McMillan W.O."/>
            <person name="Jiggins C.D."/>
        </authorList>
    </citation>
    <scope>NUCLEOTIDE SEQUENCE [GENOMIC DNA]</scope>
    <scope>FUNCTION</scope>
    <scope>POLYMORPHISM</scope>
</reference>
<comment type="function">
    <text evidence="1 3">Controls wing pigmentation patterning by regulating scale cell development, thereby playing a key role in mimicry and crypsis (PubMed:27251285). Probably acts as an activator of the anaphase promoting complex/cyclosome (APC/C) that promotes the ubiquitin ligase activity and substrate specificity of the APC/C (By similarity).</text>
</comment>
<comment type="subcellular location">
    <subcellularLocation>
        <location evidence="1">Cytoplasm</location>
    </subcellularLocation>
</comment>
<comment type="polymorphism">
    <text evidence="3">Variations in cort gene cortex directly affect wing pigmentation patterning. Variations affecting cort expression have become a major target for natural selection acting on color and pattern variation in lepidoptera.</text>
</comment>
<comment type="similarity">
    <text evidence="4">Belongs to the WD repeat CORT family.</text>
</comment>
<dbReference type="SMR" id="P0DOB8"/>
<dbReference type="GO" id="GO:0005680">
    <property type="term" value="C:anaphase-promoting complex"/>
    <property type="evidence" value="ECO:0007669"/>
    <property type="project" value="TreeGrafter"/>
</dbReference>
<dbReference type="GO" id="GO:0005737">
    <property type="term" value="C:cytoplasm"/>
    <property type="evidence" value="ECO:0007669"/>
    <property type="project" value="UniProtKB-SubCell"/>
</dbReference>
<dbReference type="GO" id="GO:0010997">
    <property type="term" value="F:anaphase-promoting complex binding"/>
    <property type="evidence" value="ECO:0007669"/>
    <property type="project" value="InterPro"/>
</dbReference>
<dbReference type="GO" id="GO:1990757">
    <property type="term" value="F:ubiquitin ligase activator activity"/>
    <property type="evidence" value="ECO:0007669"/>
    <property type="project" value="TreeGrafter"/>
</dbReference>
<dbReference type="GO" id="GO:0031145">
    <property type="term" value="P:anaphase-promoting complex-dependent catabolic process"/>
    <property type="evidence" value="ECO:0007669"/>
    <property type="project" value="TreeGrafter"/>
</dbReference>
<dbReference type="GO" id="GO:1905786">
    <property type="term" value="P:positive regulation of anaphase-promoting complex-dependent catabolic process"/>
    <property type="evidence" value="ECO:0007669"/>
    <property type="project" value="TreeGrafter"/>
</dbReference>
<dbReference type="Gene3D" id="2.130.10.10">
    <property type="entry name" value="YVTN repeat-like/Quinoprotein amine dehydrogenase"/>
    <property type="match status" value="1"/>
</dbReference>
<dbReference type="InterPro" id="IPR033010">
    <property type="entry name" value="Cdc20/Fizzy"/>
</dbReference>
<dbReference type="InterPro" id="IPR015943">
    <property type="entry name" value="WD40/YVTN_repeat-like_dom_sf"/>
</dbReference>
<dbReference type="InterPro" id="IPR036322">
    <property type="entry name" value="WD40_repeat_dom_sf"/>
</dbReference>
<dbReference type="InterPro" id="IPR001680">
    <property type="entry name" value="WD40_rpt"/>
</dbReference>
<dbReference type="PANTHER" id="PTHR19918">
    <property type="entry name" value="CELL DIVISION CYCLE 20 CDC20 FIZZY -RELATED"/>
    <property type="match status" value="1"/>
</dbReference>
<dbReference type="PANTHER" id="PTHR19918:SF52">
    <property type="entry name" value="PROTEIN CORTEX"/>
    <property type="match status" value="1"/>
</dbReference>
<dbReference type="Pfam" id="PF00400">
    <property type="entry name" value="WD40"/>
    <property type="match status" value="2"/>
</dbReference>
<dbReference type="SMART" id="SM00320">
    <property type="entry name" value="WD40"/>
    <property type="match status" value="3"/>
</dbReference>
<dbReference type="SUPFAM" id="SSF50978">
    <property type="entry name" value="WD40 repeat-like"/>
    <property type="match status" value="1"/>
</dbReference>
<dbReference type="PROSITE" id="PS00678">
    <property type="entry name" value="WD_REPEATS_1"/>
    <property type="match status" value="1"/>
</dbReference>
<dbReference type="PROSITE" id="PS50082">
    <property type="entry name" value="WD_REPEATS_2"/>
    <property type="match status" value="1"/>
</dbReference>
<dbReference type="PROSITE" id="PS50294">
    <property type="entry name" value="WD_REPEATS_REGION"/>
    <property type="match status" value="1"/>
</dbReference>
<keyword id="KW-0963">Cytoplasm</keyword>
<keyword id="KW-0677">Repeat</keyword>
<keyword id="KW-0853">WD repeat</keyword>
<accession>P0DOB8</accession>
<protein>
    <recommendedName>
        <fullName evidence="1">Protein cortex</fullName>
    </recommendedName>
</protein>
<sequence length="447" mass="51096">MDRRTFDRKTNNPQRYRLDRFVATRDSFSETRRRRSWHAAFDVHPVNNDRWSEGNLKKKNYIKYLDKAFDLESPDKNKSIKRMNRLWPCIPRKKTYLSSADSILDLPTYSYAIYPELLDWSNDNMLVAALGSSYHKWSWRSQSLIGHGFAEYEIQCCKFDPRGELLALGTYMKTLEIHNNSKSKKIMSNTCKCLEIDNMNCSITAVDWSPTGNSFAAGCSGGAVTSFTRAAKLISWRHLVREAILLIRVSPNARYLAVTAMNTALVLLLSWPSLEMYSSIDSDWSIRAICWHPWRSALLGVGAVTDDLQARIALWNAPTREVRDTSIGPKGYRLDSMLFSHRTGELVLSMWHSDRATLHPKTCSQLVVLSDPDTMVDQWGEGRSGLDRVRTMIFSPDGTKLATATTDEDLIIWNFLPEDNKMKKTKCRSFSALPECLDNAMLGYSLR</sequence>
<evidence type="ECO:0000250" key="1">
    <source>
        <dbReference type="UniProtKB" id="Q960N3"/>
    </source>
</evidence>
<evidence type="ECO:0000255" key="2"/>
<evidence type="ECO:0000269" key="3">
    <source>
    </source>
</evidence>
<evidence type="ECO:0000305" key="4"/>
<proteinExistence type="inferred from homology"/>
<feature type="chain" id="PRO_0000437218" description="Protein cortex">
    <location>
        <begin position="1"/>
        <end position="447"/>
    </location>
</feature>
<feature type="repeat" description="WD 1" evidence="2">
    <location>
        <begin position="108"/>
        <end position="148"/>
    </location>
</feature>
<feature type="repeat" description="WD 2" evidence="2">
    <location>
        <begin position="149"/>
        <end position="188"/>
    </location>
</feature>
<feature type="repeat" description="WD 3" evidence="2">
    <location>
        <begin position="198"/>
        <end position="237"/>
    </location>
</feature>
<feature type="repeat" description="WD 4" evidence="2">
    <location>
        <begin position="281"/>
        <end position="325"/>
    </location>
</feature>
<feature type="repeat" description="WD 5" evidence="2">
    <location>
        <begin position="344"/>
        <end position="380"/>
    </location>
</feature>
<feature type="repeat" description="WD 6" evidence="2">
    <location>
        <begin position="384"/>
        <end position="423"/>
    </location>
</feature>
<feature type="short sequence motif" description="D-box" evidence="1">
    <location>
        <begin position="384"/>
        <end position="395"/>
    </location>
</feature>
<organism>
    <name type="scientific">Heliconius melpomene</name>
    <name type="common">Postman butterfly</name>
    <dbReference type="NCBI Taxonomy" id="34740"/>
    <lineage>
        <taxon>Eukaryota</taxon>
        <taxon>Metazoa</taxon>
        <taxon>Ecdysozoa</taxon>
        <taxon>Arthropoda</taxon>
        <taxon>Hexapoda</taxon>
        <taxon>Insecta</taxon>
        <taxon>Pterygota</taxon>
        <taxon>Neoptera</taxon>
        <taxon>Endopterygota</taxon>
        <taxon>Lepidoptera</taxon>
        <taxon>Glossata</taxon>
        <taxon>Ditrysia</taxon>
        <taxon>Papilionoidea</taxon>
        <taxon>Nymphalidae</taxon>
        <taxon>Heliconiinae</taxon>
        <taxon>Heliconiini</taxon>
        <taxon>Heliconius</taxon>
    </lineage>
</organism>
<gene>
    <name evidence="1" type="primary">cort</name>
</gene>
<name>CORT_HELME</name>